<dbReference type="EC" id="1.3.1.9" evidence="1"/>
<dbReference type="EMBL" id="CP000744">
    <property type="protein sequence ID" value="ABR83323.1"/>
    <property type="molecule type" value="Genomic_DNA"/>
</dbReference>
<dbReference type="RefSeq" id="WP_003155818.1">
    <property type="nucleotide sequence ID" value="NC_009656.1"/>
</dbReference>
<dbReference type="SMR" id="A6V3E8"/>
<dbReference type="GeneID" id="77220559"/>
<dbReference type="KEGG" id="pap:PSPA7_2211"/>
<dbReference type="HOGENOM" id="CLU_057698_1_0_6"/>
<dbReference type="UniPathway" id="UPA00094"/>
<dbReference type="Proteomes" id="UP000001582">
    <property type="component" value="Chromosome"/>
</dbReference>
<dbReference type="GO" id="GO:0004318">
    <property type="term" value="F:enoyl-[acyl-carrier-protein] reductase (NADH) activity"/>
    <property type="evidence" value="ECO:0007669"/>
    <property type="project" value="UniProtKB-UniRule"/>
</dbReference>
<dbReference type="GO" id="GO:0051287">
    <property type="term" value="F:NAD binding"/>
    <property type="evidence" value="ECO:0007669"/>
    <property type="project" value="UniProtKB-UniRule"/>
</dbReference>
<dbReference type="GO" id="GO:0050343">
    <property type="term" value="F:trans-2-enoyl-CoA reductase (NADH) activity"/>
    <property type="evidence" value="ECO:0007669"/>
    <property type="project" value="TreeGrafter"/>
</dbReference>
<dbReference type="GO" id="GO:0006633">
    <property type="term" value="P:fatty acid biosynthetic process"/>
    <property type="evidence" value="ECO:0007669"/>
    <property type="project" value="UniProtKB-UniRule"/>
</dbReference>
<dbReference type="FunFam" id="3.40.50.720:FF:000221">
    <property type="entry name" value="Enoyl-[acyl-carrier-protein] reductase [NADH]"/>
    <property type="match status" value="1"/>
</dbReference>
<dbReference type="Gene3D" id="3.40.50.720">
    <property type="entry name" value="NAD(P)-binding Rossmann-like Domain"/>
    <property type="match status" value="1"/>
</dbReference>
<dbReference type="HAMAP" id="MF_01838">
    <property type="entry name" value="FabV_reductase"/>
    <property type="match status" value="1"/>
</dbReference>
<dbReference type="InterPro" id="IPR024906">
    <property type="entry name" value="Eno_Rdtase_FAD-bd_dom"/>
</dbReference>
<dbReference type="InterPro" id="IPR024910">
    <property type="entry name" value="Enoyl-CoA_Rdtase_cat_dom"/>
</dbReference>
<dbReference type="InterPro" id="IPR050048">
    <property type="entry name" value="FabV-like_NADH_b"/>
</dbReference>
<dbReference type="InterPro" id="IPR010758">
    <property type="entry name" value="Trans-2-enoyl-CoA_reductase"/>
</dbReference>
<dbReference type="NCBIfam" id="NF043048">
    <property type="entry name" value="EnoyACPredFabV"/>
    <property type="match status" value="1"/>
</dbReference>
<dbReference type="NCBIfam" id="NF010177">
    <property type="entry name" value="PRK13656.1"/>
    <property type="match status" value="1"/>
</dbReference>
<dbReference type="PANTHER" id="PTHR37480">
    <property type="entry name" value="ENOYL-[ACYL-CARRIER-PROTEIN] REDUCTASE [NADH]"/>
    <property type="match status" value="1"/>
</dbReference>
<dbReference type="PANTHER" id="PTHR37480:SF1">
    <property type="entry name" value="ENOYL-[ACYL-CARRIER-PROTEIN] REDUCTASE [NADH]"/>
    <property type="match status" value="1"/>
</dbReference>
<dbReference type="Pfam" id="PF07055">
    <property type="entry name" value="Eno-Rase_FAD_bd"/>
    <property type="match status" value="1"/>
</dbReference>
<dbReference type="Pfam" id="PF12242">
    <property type="entry name" value="Eno-Rase_NADH_b"/>
    <property type="match status" value="1"/>
</dbReference>
<dbReference type="Pfam" id="PF12241">
    <property type="entry name" value="Enoyl_reductase"/>
    <property type="match status" value="1"/>
</dbReference>
<reference key="1">
    <citation type="submission" date="2007-06" db="EMBL/GenBank/DDBJ databases">
        <authorList>
            <person name="Dodson R.J."/>
            <person name="Harkins D."/>
            <person name="Paulsen I.T."/>
        </authorList>
    </citation>
    <scope>NUCLEOTIDE SEQUENCE [LARGE SCALE GENOMIC DNA]</scope>
    <source>
        <strain>DSM 24068 / PA7</strain>
    </source>
</reference>
<name>FABV_PSEP7</name>
<sequence>MIIKPRVRGFICVTTHPAGCEANVKQQIDYVEAKGPVVNGPKKVLVIGSSTGYGLAARITAAFGSGADTLGVFFERPGSESKPGTAGWYNSAAFEKFAHEKGLYARSINGDAFSDEVKRLTIETIKRDLGKVDLVVYSLAAPRRTHPKTGEVFSSTLKPIGKSVSFRGLDTDKEVIKDVVLEAASDQEVADTVAVMGGEDWQMWIDALLEADVLADGAKTTAFTYLGEKITHDIYWNGSIGAAKKDLDQKVLGIRDRLAPLGGDARVSVLKAVVTQASSAIPMMPLYLSLLFKVMKEQGTHEGCIEQVDGLYRESLYGAEPRLDEEGRLRADYKELQPEVQSRVEELWDKVTNENLYELTDFAGYKSEFLNLFGFEVAGVDYEQDVDPDVQIANLIQA</sequence>
<keyword id="KW-0275">Fatty acid biosynthesis</keyword>
<keyword id="KW-0276">Fatty acid metabolism</keyword>
<keyword id="KW-0444">Lipid biosynthesis</keyword>
<keyword id="KW-0443">Lipid metabolism</keyword>
<keyword id="KW-0520">NAD</keyword>
<keyword id="KW-0560">Oxidoreductase</keyword>
<evidence type="ECO:0000255" key="1">
    <source>
        <dbReference type="HAMAP-Rule" id="MF_01838"/>
    </source>
</evidence>
<organism>
    <name type="scientific">Pseudomonas paraeruginosa (strain DSM 24068 / PA7)</name>
    <name type="common">Pseudomonas aeruginosa (strain PA7)</name>
    <dbReference type="NCBI Taxonomy" id="381754"/>
    <lineage>
        <taxon>Bacteria</taxon>
        <taxon>Pseudomonadati</taxon>
        <taxon>Pseudomonadota</taxon>
        <taxon>Gammaproteobacteria</taxon>
        <taxon>Pseudomonadales</taxon>
        <taxon>Pseudomonadaceae</taxon>
        <taxon>Pseudomonas</taxon>
        <taxon>Pseudomonas paraeruginosa</taxon>
    </lineage>
</organism>
<feature type="chain" id="PRO_1000070487" description="Enoyl-[acyl-carrier-protein] reductase [NADH]">
    <location>
        <begin position="1"/>
        <end position="398"/>
    </location>
</feature>
<feature type="active site" description="Proton donor" evidence="1">
    <location>
        <position position="235"/>
    </location>
</feature>
<feature type="binding site" evidence="1">
    <location>
        <begin position="48"/>
        <end position="53"/>
    </location>
    <ligand>
        <name>NAD(+)</name>
        <dbReference type="ChEBI" id="CHEBI:57540"/>
    </ligand>
</feature>
<feature type="binding site" evidence="1">
    <location>
        <begin position="74"/>
        <end position="75"/>
    </location>
    <ligand>
        <name>NAD(+)</name>
        <dbReference type="ChEBI" id="CHEBI:57540"/>
    </ligand>
</feature>
<feature type="binding site" evidence="1">
    <location>
        <begin position="111"/>
        <end position="112"/>
    </location>
    <ligand>
        <name>NAD(+)</name>
        <dbReference type="ChEBI" id="CHEBI:57540"/>
    </ligand>
</feature>
<feature type="binding site" evidence="1">
    <location>
        <begin position="139"/>
        <end position="140"/>
    </location>
    <ligand>
        <name>NAD(+)</name>
        <dbReference type="ChEBI" id="CHEBI:57540"/>
    </ligand>
</feature>
<feature type="binding site" evidence="1">
    <location>
        <position position="225"/>
    </location>
    <ligand>
        <name>substrate</name>
    </ligand>
</feature>
<feature type="binding site" evidence="1">
    <location>
        <position position="244"/>
    </location>
    <ligand>
        <name>NAD(+)</name>
        <dbReference type="ChEBI" id="CHEBI:57540"/>
    </ligand>
</feature>
<feature type="binding site" evidence="1">
    <location>
        <begin position="273"/>
        <end position="275"/>
    </location>
    <ligand>
        <name>NAD(+)</name>
        <dbReference type="ChEBI" id="CHEBI:57540"/>
    </ligand>
</feature>
<feature type="site" description="Plays an important role in discriminating NADH against NADPH" evidence="1">
    <location>
        <position position="75"/>
    </location>
</feature>
<accession>A6V3E8</accession>
<gene>
    <name evidence="1" type="primary">fabV</name>
    <name type="ordered locus">PSPA7_2211</name>
</gene>
<comment type="function">
    <text evidence="1">Involved in the final reduction of the elongation cycle of fatty acid synthesis (FAS II). Catalyzes the reduction of a carbon-carbon double bond in an enoyl moiety that is covalently linked to an acyl carrier protein (ACP).</text>
</comment>
<comment type="catalytic activity">
    <reaction evidence="1">
        <text>a 2,3-saturated acyl-[ACP] + NAD(+) = a (2E)-enoyl-[ACP] + NADH + H(+)</text>
        <dbReference type="Rhea" id="RHEA:10240"/>
        <dbReference type="Rhea" id="RHEA-COMP:9925"/>
        <dbReference type="Rhea" id="RHEA-COMP:9926"/>
        <dbReference type="ChEBI" id="CHEBI:15378"/>
        <dbReference type="ChEBI" id="CHEBI:57540"/>
        <dbReference type="ChEBI" id="CHEBI:57945"/>
        <dbReference type="ChEBI" id="CHEBI:78784"/>
        <dbReference type="ChEBI" id="CHEBI:78785"/>
        <dbReference type="EC" id="1.3.1.9"/>
    </reaction>
</comment>
<comment type="pathway">
    <text evidence="1">Lipid metabolism; fatty acid biosynthesis.</text>
</comment>
<comment type="subunit">
    <text evidence="1">Monomer.</text>
</comment>
<comment type="similarity">
    <text evidence="1">Belongs to the TER reductase family.</text>
</comment>
<proteinExistence type="inferred from homology"/>
<protein>
    <recommendedName>
        <fullName evidence="1">Enoyl-[acyl-carrier-protein] reductase [NADH]</fullName>
        <shortName evidence="1">ENR</shortName>
        <ecNumber evidence="1">1.3.1.9</ecNumber>
    </recommendedName>
</protein>